<organism>
    <name type="scientific">Dictyostelium discoideum</name>
    <name type="common">Social amoeba</name>
    <dbReference type="NCBI Taxonomy" id="44689"/>
    <lineage>
        <taxon>Eukaryota</taxon>
        <taxon>Amoebozoa</taxon>
        <taxon>Evosea</taxon>
        <taxon>Eumycetozoa</taxon>
        <taxon>Dictyostelia</taxon>
        <taxon>Dictyosteliales</taxon>
        <taxon>Dictyosteliaceae</taxon>
        <taxon>Dictyostelium</taxon>
    </lineage>
</organism>
<evidence type="ECO:0000305" key="1"/>
<protein>
    <recommendedName>
        <fullName>c-Myc-binding protein homolog</fullName>
    </recommendedName>
</protein>
<accession>Q54I57</accession>
<feature type="chain" id="PRO_0000328294" description="c-Myc-binding protein homolog">
    <location>
        <begin position="1"/>
        <end position="90"/>
    </location>
</feature>
<reference key="1">
    <citation type="journal article" date="2005" name="Nature">
        <title>The genome of the social amoeba Dictyostelium discoideum.</title>
        <authorList>
            <person name="Eichinger L."/>
            <person name="Pachebat J.A."/>
            <person name="Gloeckner G."/>
            <person name="Rajandream M.A."/>
            <person name="Sucgang R."/>
            <person name="Berriman M."/>
            <person name="Song J."/>
            <person name="Olsen R."/>
            <person name="Szafranski K."/>
            <person name="Xu Q."/>
            <person name="Tunggal B."/>
            <person name="Kummerfeld S."/>
            <person name="Madera M."/>
            <person name="Konfortov B.A."/>
            <person name="Rivero F."/>
            <person name="Bankier A.T."/>
            <person name="Lehmann R."/>
            <person name="Hamlin N."/>
            <person name="Davies R."/>
            <person name="Gaudet P."/>
            <person name="Fey P."/>
            <person name="Pilcher K."/>
            <person name="Chen G."/>
            <person name="Saunders D."/>
            <person name="Sodergren E.J."/>
            <person name="Davis P."/>
            <person name="Kerhornou A."/>
            <person name="Nie X."/>
            <person name="Hall N."/>
            <person name="Anjard C."/>
            <person name="Hemphill L."/>
            <person name="Bason N."/>
            <person name="Farbrother P."/>
            <person name="Desany B."/>
            <person name="Just E."/>
            <person name="Morio T."/>
            <person name="Rost R."/>
            <person name="Churcher C.M."/>
            <person name="Cooper J."/>
            <person name="Haydock S."/>
            <person name="van Driessche N."/>
            <person name="Cronin A."/>
            <person name="Goodhead I."/>
            <person name="Muzny D.M."/>
            <person name="Mourier T."/>
            <person name="Pain A."/>
            <person name="Lu M."/>
            <person name="Harper D."/>
            <person name="Lindsay R."/>
            <person name="Hauser H."/>
            <person name="James K.D."/>
            <person name="Quiles M."/>
            <person name="Madan Babu M."/>
            <person name="Saito T."/>
            <person name="Buchrieser C."/>
            <person name="Wardroper A."/>
            <person name="Felder M."/>
            <person name="Thangavelu M."/>
            <person name="Johnson D."/>
            <person name="Knights A."/>
            <person name="Loulseged H."/>
            <person name="Mungall K.L."/>
            <person name="Oliver K."/>
            <person name="Price C."/>
            <person name="Quail M.A."/>
            <person name="Urushihara H."/>
            <person name="Hernandez J."/>
            <person name="Rabbinowitsch E."/>
            <person name="Steffen D."/>
            <person name="Sanders M."/>
            <person name="Ma J."/>
            <person name="Kohara Y."/>
            <person name="Sharp S."/>
            <person name="Simmonds M.N."/>
            <person name="Spiegler S."/>
            <person name="Tivey A."/>
            <person name="Sugano S."/>
            <person name="White B."/>
            <person name="Walker D."/>
            <person name="Woodward J.R."/>
            <person name="Winckler T."/>
            <person name="Tanaka Y."/>
            <person name="Shaulsky G."/>
            <person name="Schleicher M."/>
            <person name="Weinstock G.M."/>
            <person name="Rosenthal A."/>
            <person name="Cox E.C."/>
            <person name="Chisholm R.L."/>
            <person name="Gibbs R.A."/>
            <person name="Loomis W.F."/>
            <person name="Platzer M."/>
            <person name="Kay R.R."/>
            <person name="Williams J.G."/>
            <person name="Dear P.H."/>
            <person name="Noegel A.A."/>
            <person name="Barrell B.G."/>
            <person name="Kuspa A."/>
        </authorList>
    </citation>
    <scope>NUCLEOTIDE SEQUENCE [LARGE SCALE GENOMIC DNA]</scope>
    <source>
        <strain>AX4</strain>
    </source>
</reference>
<name>MYCBP_DICDI</name>
<keyword id="KW-0539">Nucleus</keyword>
<keyword id="KW-1185">Reference proteome</keyword>
<sequence>MQNSAEKEEFKGYLEKSGVIDALTKVLVGLYEESDKPSDALEFIKKHLGNSLGIDVDALKQENADLKAEVSALTQRVDDLSKKLEAANKQ</sequence>
<comment type="subcellular location">
    <subcellularLocation>
        <location evidence="1">Nucleus</location>
    </subcellularLocation>
</comment>
<comment type="similarity">
    <text evidence="1">Belongs to the AMY1 family.</text>
</comment>
<proteinExistence type="inferred from homology"/>
<dbReference type="EMBL" id="AAFI02000129">
    <property type="protein sequence ID" value="EAL62950.1"/>
    <property type="molecule type" value="Genomic_DNA"/>
</dbReference>
<dbReference type="RefSeq" id="XP_636453.1">
    <property type="nucleotide sequence ID" value="XM_631361.1"/>
</dbReference>
<dbReference type="SMR" id="Q54I57"/>
<dbReference type="FunCoup" id="Q54I57">
    <property type="interactions" value="20"/>
</dbReference>
<dbReference type="STRING" id="44689.Q54I57"/>
<dbReference type="PaxDb" id="44689-DDB0305169"/>
<dbReference type="EnsemblProtists" id="EAL62950">
    <property type="protein sequence ID" value="EAL62950"/>
    <property type="gene ID" value="DDB_G0288991"/>
</dbReference>
<dbReference type="GeneID" id="8626905"/>
<dbReference type="KEGG" id="ddi:DDB_G0288991"/>
<dbReference type="dictyBase" id="DDB_G0288991"/>
<dbReference type="VEuPathDB" id="AmoebaDB:DDB_G0288991"/>
<dbReference type="eggNOG" id="ENOG502S7GH">
    <property type="taxonomic scope" value="Eukaryota"/>
</dbReference>
<dbReference type="HOGENOM" id="CLU_135895_3_0_1"/>
<dbReference type="InParanoid" id="Q54I57"/>
<dbReference type="OMA" id="MMHYKEE"/>
<dbReference type="PhylomeDB" id="Q54I57"/>
<dbReference type="PRO" id="PR:Q54I57"/>
<dbReference type="Proteomes" id="UP000002195">
    <property type="component" value="Chromosome 5"/>
</dbReference>
<dbReference type="GO" id="GO:0005634">
    <property type="term" value="C:nucleus"/>
    <property type="evidence" value="ECO:0000250"/>
    <property type="project" value="UniProtKB"/>
</dbReference>
<dbReference type="GO" id="GO:0003713">
    <property type="term" value="F:transcription coactivator activity"/>
    <property type="evidence" value="ECO:0000318"/>
    <property type="project" value="GO_Central"/>
</dbReference>
<dbReference type="GO" id="GO:0006355">
    <property type="term" value="P:regulation of DNA-templated transcription"/>
    <property type="evidence" value="ECO:0000318"/>
    <property type="project" value="GO_Central"/>
</dbReference>
<dbReference type="CDD" id="cd21937">
    <property type="entry name" value="ZIP_MycBP-like"/>
    <property type="match status" value="1"/>
</dbReference>
<dbReference type="Gene3D" id="6.10.250.1060">
    <property type="match status" value="1"/>
</dbReference>
<dbReference type="InterPro" id="IPR026060">
    <property type="entry name" value="AMY1"/>
</dbReference>
<dbReference type="PANTHER" id="PTHR13168">
    <property type="entry name" value="ASSOCIATE OF C-MYC AMY-1"/>
    <property type="match status" value="1"/>
</dbReference>
<dbReference type="PANTHER" id="PTHR13168:SF0">
    <property type="entry name" value="C-MYC-BINDING PROTEIN"/>
    <property type="match status" value="1"/>
</dbReference>
<dbReference type="PRINTS" id="PR02028">
    <property type="entry name" value="CMYCBINDINGP"/>
</dbReference>
<gene>
    <name type="primary">mycbp</name>
    <name type="ORF">DDB_G0288991</name>
</gene>